<name>BDS1_URTCR</name>
<evidence type="ECO:0000250" key="1">
    <source>
        <dbReference type="UniProtKB" id="G0W2H8"/>
    </source>
</evidence>
<evidence type="ECO:0000250" key="2">
    <source>
        <dbReference type="UniProtKB" id="P61541"/>
    </source>
</evidence>
<evidence type="ECO:0000255" key="3"/>
<evidence type="ECO:0000269" key="4">
    <source>
    </source>
</evidence>
<evidence type="ECO:0000303" key="5">
    <source>
    </source>
</evidence>
<evidence type="ECO:0000305" key="6"/>
<evidence type="ECO:0000305" key="7">
    <source>
    </source>
</evidence>
<proteinExistence type="evidence at protein level"/>
<feature type="signal peptide" evidence="3">
    <location>
        <begin position="1"/>
        <end position="19"/>
    </location>
</feature>
<feature type="propeptide" id="PRO_0000452124" evidence="1">
    <location>
        <begin position="20"/>
        <end position="39"/>
    </location>
</feature>
<feature type="chain" id="PRO_5011001360" description="Crassicorin-I" evidence="4">
    <location>
        <begin position="40"/>
        <end position="79"/>
    </location>
</feature>
<feature type="disulfide bond" evidence="2">
    <location>
        <begin position="43"/>
        <end position="76"/>
    </location>
</feature>
<feature type="disulfide bond" evidence="2">
    <location>
        <begin position="45"/>
        <end position="69"/>
    </location>
</feature>
<feature type="disulfide bond" evidence="2">
    <location>
        <begin position="59"/>
        <end position="77"/>
    </location>
</feature>
<reference key="1">
    <citation type="journal article" date="2017" name="FEBS J.">
        <title>Defensin-neurotoxin dyad in a basally branching metazoan sea anemone.</title>
        <authorList>
            <person name="Kim C.H."/>
            <person name="Lee Y.J."/>
            <person name="Go H.J."/>
            <person name="Oh H.Y."/>
            <person name="Lee T.K."/>
            <person name="Park J.B."/>
            <person name="Park N.G."/>
        </authorList>
    </citation>
    <scope>NUCLEOTIDE SEQUENCE [MRNA]</scope>
    <scope>PROTEIN SEQUENCE OF 40-75</scope>
    <scope>FUNCTION</scope>
    <scope>SUBCELLULAR LOCATION</scope>
    <scope>TISSUE SPECIFICITY</scope>
    <scope>MASS SPECTROMETRY</scope>
    <scope>TOXIC DOSE</scope>
    <scope>RECOMBINANT EXPRESSION</scope>
    <scope>3D-STRUCTURE MODELING</scope>
</reference>
<keyword id="KW-0044">Antibiotic</keyword>
<keyword id="KW-0929">Antimicrobial</keyword>
<keyword id="KW-0165">Cleavage on pair of basic residues</keyword>
<keyword id="KW-0903">Direct protein sequencing</keyword>
<keyword id="KW-1015">Disulfide bond</keyword>
<keyword id="KW-0391">Immunity</keyword>
<keyword id="KW-0399">Innate immunity</keyword>
<keyword id="KW-0872">Ion channel impairing toxin</keyword>
<keyword id="KW-0166">Nematocyst</keyword>
<keyword id="KW-0528">Neurotoxin</keyword>
<keyword id="KW-0964">Secreted</keyword>
<keyword id="KW-0732">Signal</keyword>
<keyword id="KW-0800">Toxin</keyword>
<accession>A0A1X9QHL1</accession>
<comment type="function">
    <text evidence="4 7">Peptide with both antimicrobial and neurotoxin activities. Cationic AMP with antibacterial activity against both Gram-positive bacteria (B.subtilis, MIC=11.49 ug/mL) and Gram-negative bacteria (E.coli (MIC=12.21 ug/mL) and S.enterica (MIC=11.95 ug/mL)) (PubMed:28796463). Shows no significant antimicrobial activity against bacteria S.aureus and P.aeruginosa, as well as the fungus C.albicans (PubMed:28796463). In vivo, induces reversible paralytic activity towards the shrimp P.paucidens (PubMed:28796463). May act by impairing sodium or potassium channels in the prey (Probable).</text>
</comment>
<comment type="subcellular location">
    <subcellularLocation>
        <location evidence="4">Secreted</location>
    </subcellularLocation>
    <subcellularLocation>
        <location evidence="7">Nematocyst</location>
    </subcellularLocation>
</comment>
<comment type="tissue specificity">
    <text evidence="4">Highly expressed by the mesenteries. Moderately expressed by the pharynx. Weakly expressed by the gonad and pedal disk. No expression in tentacle.</text>
</comment>
<comment type="induction">
    <text evidence="4">Transcriptionally up-regulated by immune challenge.</text>
</comment>
<comment type="mass spectrometry" mass="4313.8" method="MALDI" evidence="4"/>
<comment type="toxic dose">
    <text evidence="4">PD(50) is 0.84 +- 0.16 ug/g body weight when injected into the shrimp P.paucidens. The minimum paralytic dose is 2 ug/g body weight shrimp body weight.</text>
</comment>
<comment type="similarity">
    <text evidence="6">Belongs to the sea anemone type 3 (BDS) potassium channel toxin family.</text>
</comment>
<organism>
    <name type="scientific">Urticina crassicornis</name>
    <name type="common">Mottled anemone</name>
    <name type="synonym">Tealia crassicornis</name>
    <dbReference type="NCBI Taxonomy" id="45621"/>
    <lineage>
        <taxon>Eukaryota</taxon>
        <taxon>Metazoa</taxon>
        <taxon>Cnidaria</taxon>
        <taxon>Anthozoa</taxon>
        <taxon>Hexacorallia</taxon>
        <taxon>Actiniaria</taxon>
        <taxon>Actiniidae</taxon>
        <taxon>Urticina</taxon>
    </lineage>
</organism>
<dbReference type="EMBL" id="KY229683">
    <property type="protein sequence ID" value="ARQ30160.1"/>
    <property type="molecule type" value="mRNA"/>
</dbReference>
<dbReference type="SMR" id="A0A1X9QHL1"/>
<dbReference type="GO" id="GO:0005576">
    <property type="term" value="C:extracellular region"/>
    <property type="evidence" value="ECO:0007669"/>
    <property type="project" value="UniProtKB-SubCell"/>
</dbReference>
<dbReference type="GO" id="GO:0042151">
    <property type="term" value="C:nematocyst"/>
    <property type="evidence" value="ECO:0007669"/>
    <property type="project" value="UniProtKB-SubCell"/>
</dbReference>
<dbReference type="GO" id="GO:0008200">
    <property type="term" value="F:ion channel inhibitor activity"/>
    <property type="evidence" value="ECO:0007669"/>
    <property type="project" value="InterPro"/>
</dbReference>
<dbReference type="GO" id="GO:0090729">
    <property type="term" value="F:toxin activity"/>
    <property type="evidence" value="ECO:0007669"/>
    <property type="project" value="UniProtKB-KW"/>
</dbReference>
<dbReference type="GO" id="GO:0042742">
    <property type="term" value="P:defense response to bacterium"/>
    <property type="evidence" value="ECO:0007669"/>
    <property type="project" value="UniProtKB-KW"/>
</dbReference>
<dbReference type="GO" id="GO:0045087">
    <property type="term" value="P:innate immune response"/>
    <property type="evidence" value="ECO:0007669"/>
    <property type="project" value="UniProtKB-KW"/>
</dbReference>
<dbReference type="Gene3D" id="2.20.20.10">
    <property type="entry name" value="Anthopleurin-A"/>
    <property type="match status" value="1"/>
</dbReference>
<dbReference type="InterPro" id="IPR012414">
    <property type="entry name" value="BDS_K_chnl_tox"/>
</dbReference>
<dbReference type="InterPro" id="IPR023355">
    <property type="entry name" value="Myo_ane_neurotoxin_sf"/>
</dbReference>
<dbReference type="Pfam" id="PF07936">
    <property type="entry name" value="Defensin_4"/>
    <property type="match status" value="1"/>
</dbReference>
<sequence length="79" mass="8754">MKLFLVSIVLVGMLVLAAARPERDIDSFDEQEEKGFVKRGASCDCHPFVGTYWFGISNCPSGHGYRKKCASFFGVCCVK</sequence>
<protein>
    <recommendedName>
        <fullName evidence="5">Crassicorin-I</fullName>
    </recommendedName>
    <alternativeName>
        <fullName evidence="5">BDS-like antimicrobial peptide</fullName>
        <shortName evidence="5">BDS-like AMP</shortName>
    </alternativeName>
</protein>